<accession>A3M990</accession>
<name>ENGB_ACIBT</name>
<dbReference type="EMBL" id="CP000521">
    <property type="protein sequence ID" value="ABO13484.2"/>
    <property type="status" value="ALT_INIT"/>
    <property type="molecule type" value="Genomic_DNA"/>
</dbReference>
<dbReference type="SMR" id="A3M990"/>
<dbReference type="KEGG" id="acb:A1S_3087"/>
<dbReference type="HOGENOM" id="CLU_033732_1_0_6"/>
<dbReference type="GO" id="GO:0005829">
    <property type="term" value="C:cytosol"/>
    <property type="evidence" value="ECO:0007669"/>
    <property type="project" value="TreeGrafter"/>
</dbReference>
<dbReference type="GO" id="GO:0005525">
    <property type="term" value="F:GTP binding"/>
    <property type="evidence" value="ECO:0007669"/>
    <property type="project" value="UniProtKB-UniRule"/>
</dbReference>
<dbReference type="GO" id="GO:0046872">
    <property type="term" value="F:metal ion binding"/>
    <property type="evidence" value="ECO:0007669"/>
    <property type="project" value="UniProtKB-KW"/>
</dbReference>
<dbReference type="GO" id="GO:0000917">
    <property type="term" value="P:division septum assembly"/>
    <property type="evidence" value="ECO:0007669"/>
    <property type="project" value="UniProtKB-KW"/>
</dbReference>
<dbReference type="CDD" id="cd01876">
    <property type="entry name" value="YihA_EngB"/>
    <property type="match status" value="1"/>
</dbReference>
<dbReference type="FunFam" id="3.40.50.300:FF:000098">
    <property type="entry name" value="Probable GTP-binding protein EngB"/>
    <property type="match status" value="1"/>
</dbReference>
<dbReference type="Gene3D" id="3.40.50.300">
    <property type="entry name" value="P-loop containing nucleotide triphosphate hydrolases"/>
    <property type="match status" value="1"/>
</dbReference>
<dbReference type="HAMAP" id="MF_00321">
    <property type="entry name" value="GTPase_EngB"/>
    <property type="match status" value="1"/>
</dbReference>
<dbReference type="InterPro" id="IPR030393">
    <property type="entry name" value="G_ENGB_dom"/>
</dbReference>
<dbReference type="InterPro" id="IPR006073">
    <property type="entry name" value="GTP-bd"/>
</dbReference>
<dbReference type="InterPro" id="IPR019987">
    <property type="entry name" value="GTP-bd_ribosome_bio_YsxC"/>
</dbReference>
<dbReference type="InterPro" id="IPR027417">
    <property type="entry name" value="P-loop_NTPase"/>
</dbReference>
<dbReference type="NCBIfam" id="TIGR03598">
    <property type="entry name" value="GTPase_YsxC"/>
    <property type="match status" value="1"/>
</dbReference>
<dbReference type="PANTHER" id="PTHR11649:SF13">
    <property type="entry name" value="ENGB-TYPE G DOMAIN-CONTAINING PROTEIN"/>
    <property type="match status" value="1"/>
</dbReference>
<dbReference type="PANTHER" id="PTHR11649">
    <property type="entry name" value="MSS1/TRME-RELATED GTP-BINDING PROTEIN"/>
    <property type="match status" value="1"/>
</dbReference>
<dbReference type="Pfam" id="PF01926">
    <property type="entry name" value="MMR_HSR1"/>
    <property type="match status" value="1"/>
</dbReference>
<dbReference type="SUPFAM" id="SSF52540">
    <property type="entry name" value="P-loop containing nucleoside triphosphate hydrolases"/>
    <property type="match status" value="1"/>
</dbReference>
<dbReference type="PROSITE" id="PS51706">
    <property type="entry name" value="G_ENGB"/>
    <property type="match status" value="1"/>
</dbReference>
<proteinExistence type="inferred from homology"/>
<organism>
    <name type="scientific">Acinetobacter baumannii (strain ATCC 17978 / DSM 105126 / CIP 53.77 / LMG 1025 / NCDC KC755 / 5377)</name>
    <dbReference type="NCBI Taxonomy" id="400667"/>
    <lineage>
        <taxon>Bacteria</taxon>
        <taxon>Pseudomonadati</taxon>
        <taxon>Pseudomonadota</taxon>
        <taxon>Gammaproteobacteria</taxon>
        <taxon>Moraxellales</taxon>
        <taxon>Moraxellaceae</taxon>
        <taxon>Acinetobacter</taxon>
        <taxon>Acinetobacter calcoaceticus/baumannii complex</taxon>
    </lineage>
</organism>
<protein>
    <recommendedName>
        <fullName evidence="1">Probable GTP-binding protein EngB</fullName>
    </recommendedName>
</protein>
<feature type="chain" id="PRO_1000005793" description="Probable GTP-binding protein EngB">
    <location>
        <begin position="1"/>
        <end position="211"/>
    </location>
</feature>
<feature type="domain" description="EngB-type G" evidence="1">
    <location>
        <begin position="13"/>
        <end position="188"/>
    </location>
</feature>
<feature type="binding site" evidence="1">
    <location>
        <begin position="21"/>
        <end position="28"/>
    </location>
    <ligand>
        <name>GTP</name>
        <dbReference type="ChEBI" id="CHEBI:37565"/>
    </ligand>
</feature>
<feature type="binding site" evidence="1">
    <location>
        <position position="28"/>
    </location>
    <ligand>
        <name>Mg(2+)</name>
        <dbReference type="ChEBI" id="CHEBI:18420"/>
    </ligand>
</feature>
<feature type="binding site" evidence="1">
    <location>
        <begin position="48"/>
        <end position="52"/>
    </location>
    <ligand>
        <name>GTP</name>
        <dbReference type="ChEBI" id="CHEBI:37565"/>
    </ligand>
</feature>
<feature type="binding site" evidence="1">
    <location>
        <position position="50"/>
    </location>
    <ligand>
        <name>Mg(2+)</name>
        <dbReference type="ChEBI" id="CHEBI:18420"/>
    </ligand>
</feature>
<feature type="binding site" evidence="1">
    <location>
        <begin position="67"/>
        <end position="70"/>
    </location>
    <ligand>
        <name>GTP</name>
        <dbReference type="ChEBI" id="CHEBI:37565"/>
    </ligand>
</feature>
<feature type="binding site" evidence="1">
    <location>
        <begin position="134"/>
        <end position="137"/>
    </location>
    <ligand>
        <name>GTP</name>
        <dbReference type="ChEBI" id="CHEBI:37565"/>
    </ligand>
</feature>
<feature type="binding site" evidence="1">
    <location>
        <begin position="167"/>
        <end position="169"/>
    </location>
    <ligand>
        <name>GTP</name>
        <dbReference type="ChEBI" id="CHEBI:37565"/>
    </ligand>
</feature>
<keyword id="KW-0131">Cell cycle</keyword>
<keyword id="KW-0132">Cell division</keyword>
<keyword id="KW-0342">GTP-binding</keyword>
<keyword id="KW-0460">Magnesium</keyword>
<keyword id="KW-0479">Metal-binding</keyword>
<keyword id="KW-0547">Nucleotide-binding</keyword>
<keyword id="KW-0717">Septation</keyword>
<evidence type="ECO:0000255" key="1">
    <source>
        <dbReference type="HAMAP-Rule" id="MF_00321"/>
    </source>
</evidence>
<evidence type="ECO:0000305" key="2"/>
<sequence>MSAPKLALCVEDSGYEIAFAGRSNAGKSSAINALTNQKQLARASKKPGRTQMINFFSLGNPDQRLVDLPGYGYAAVPEDMKRVWQKELENYLIHRKSLQGLVLLMDIRHPLQHFDMMMLEWAYSRHLFVHILLTKADKLNRGPANKVLLEVKQQLKKMKLDFSIQLFSSLNKLGLEELASVMAGRLHFTLEQQPEFDVDAIPEASDEDAEE</sequence>
<comment type="function">
    <text evidence="1">Necessary for normal cell division and for the maintenance of normal septation.</text>
</comment>
<comment type="cofactor">
    <cofactor evidence="1">
        <name>Mg(2+)</name>
        <dbReference type="ChEBI" id="CHEBI:18420"/>
    </cofactor>
</comment>
<comment type="similarity">
    <text evidence="1">Belongs to the TRAFAC class TrmE-Era-EngA-EngB-Septin-like GTPase superfamily. EngB GTPase family.</text>
</comment>
<comment type="sequence caution" evidence="2">
    <conflict type="erroneous initiation">
        <sequence resource="EMBL-CDS" id="ABO13484"/>
    </conflict>
</comment>
<gene>
    <name evidence="1" type="primary">engB</name>
    <name type="ordered locus">A1S_3087</name>
</gene>
<reference key="1">
    <citation type="journal article" date="2007" name="Genes Dev.">
        <title>New insights into Acinetobacter baumannii pathogenesis revealed by high-density pyrosequencing and transposon mutagenesis.</title>
        <authorList>
            <person name="Smith M.G."/>
            <person name="Gianoulis T.A."/>
            <person name="Pukatzki S."/>
            <person name="Mekalanos J.J."/>
            <person name="Ornston L.N."/>
            <person name="Gerstein M."/>
            <person name="Snyder M."/>
        </authorList>
    </citation>
    <scope>NUCLEOTIDE SEQUENCE [LARGE SCALE GENOMIC DNA]</scope>
    <source>
        <strain>ATCC 17978 / DSM 105126 / CIP 53.77 / LMG 1025 / NCDC KC755 / 5377</strain>
    </source>
</reference>